<keyword id="KW-0030">Aminoacyl-tRNA synthetase</keyword>
<keyword id="KW-0067">ATP-binding</keyword>
<keyword id="KW-0963">Cytoplasm</keyword>
<keyword id="KW-0436">Ligase</keyword>
<keyword id="KW-0479">Metal-binding</keyword>
<keyword id="KW-0547">Nucleotide-binding</keyword>
<keyword id="KW-0648">Protein biosynthesis</keyword>
<keyword id="KW-0694">RNA-binding</keyword>
<keyword id="KW-0820">tRNA-binding</keyword>
<keyword id="KW-0862">Zinc</keyword>
<accession>A0RPR0</accession>
<sequence>MDIRKEYLDFFKSKGHEIITSAPLVPDDATLLFTNAGMVPFKSIFTGDVPRPNPPIRTSCQTCIRAGGKHNDLDNVGYTARHHTFFEMLGNFSFGEYFKKDAISYAWEFVTEVLKLPKDKLYVTVHEKDDEAYELWQKFIQKDRIYRFGDKDNFWAMGDTGPCGPCSEIFYDQGSEHFNSDEDYMGGDGDRFLEIWNLVFMQFERSKDGTMTPLPKPSIDTGMGLERVTAIKEDKFSNYDSSLFMPLINEVAKLCHKQYEYKTGASYRVISDHIRSVTFLLAQGVNFDKEGRGYVLRRILRRAVRHGYLLGIKEPFMYKLVDKVVELMGEHYSYLKEKKEYVKELIKLEEERFLATIVAGLDLFNEELAKTSSNVFSGEVAFKLYDTYGFPLDLTADMLREKGLSVDEAKFDALMNEQKARAKASWKGSGDAAKESGDFKTLLEEFGENKFIGYDNLKSSSKVLALLNSEFKRVNELKNGEIGYVMLDSTPFYAQSGGQCGDTGMLGENQALDTKKYFGLNLSMIEAKNSIKIGDIVLCEVSLNRLEIRRHHSATHLLQAALRNVLGAHIAQAGSSVEADKLRFDFSHPKPVTKEELEKIENFVNEAILKGAPAKIEIMDIQNAKKSGAIALFGEKYADKVRVLTLGPSKELCGGTHVENLNEIGSFFIVRESGVSAGVRRIEAVCSKAALELSKEFRKEINDIKDSLKGADPLLSIKKLKDEIKSLQNDLKNASNTKDLDVKDINGVKVVVSKFDGDIKSKIDELKNKFDKVVVFLAGVKDGKVSLGSGSKNTSIKAGELVKTVAPIVGGGGGGRDDFATAGGKDESKIDEALNAATKFISEKL</sequence>
<protein>
    <recommendedName>
        <fullName evidence="1">Alanine--tRNA ligase</fullName>
        <ecNumber evidence="1">6.1.1.7</ecNumber>
    </recommendedName>
    <alternativeName>
        <fullName evidence="1">Alanyl-tRNA synthetase</fullName>
        <shortName evidence="1">AlaRS</shortName>
    </alternativeName>
</protein>
<feature type="chain" id="PRO_0000347540" description="Alanine--tRNA ligase">
    <location>
        <begin position="1"/>
        <end position="845"/>
    </location>
</feature>
<feature type="binding site" evidence="1">
    <location>
        <position position="552"/>
    </location>
    <ligand>
        <name>Zn(2+)</name>
        <dbReference type="ChEBI" id="CHEBI:29105"/>
    </ligand>
</feature>
<feature type="binding site" evidence="1">
    <location>
        <position position="556"/>
    </location>
    <ligand>
        <name>Zn(2+)</name>
        <dbReference type="ChEBI" id="CHEBI:29105"/>
    </ligand>
</feature>
<feature type="binding site" evidence="1">
    <location>
        <position position="653"/>
    </location>
    <ligand>
        <name>Zn(2+)</name>
        <dbReference type="ChEBI" id="CHEBI:29105"/>
    </ligand>
</feature>
<feature type="binding site" evidence="1">
    <location>
        <position position="657"/>
    </location>
    <ligand>
        <name>Zn(2+)</name>
        <dbReference type="ChEBI" id="CHEBI:29105"/>
    </ligand>
</feature>
<dbReference type="EC" id="6.1.1.7" evidence="1"/>
<dbReference type="EMBL" id="CP000487">
    <property type="protein sequence ID" value="ABK82744.1"/>
    <property type="molecule type" value="Genomic_DNA"/>
</dbReference>
<dbReference type="RefSeq" id="WP_011732051.1">
    <property type="nucleotide sequence ID" value="NC_008599.1"/>
</dbReference>
<dbReference type="SMR" id="A0RPR0"/>
<dbReference type="GeneID" id="61064857"/>
<dbReference type="KEGG" id="cff:CFF8240_1029"/>
<dbReference type="PATRIC" id="fig|360106.6.peg.1001"/>
<dbReference type="eggNOG" id="COG0013">
    <property type="taxonomic scope" value="Bacteria"/>
</dbReference>
<dbReference type="HOGENOM" id="CLU_004485_1_1_7"/>
<dbReference type="Proteomes" id="UP000000760">
    <property type="component" value="Chromosome"/>
</dbReference>
<dbReference type="GO" id="GO:0005829">
    <property type="term" value="C:cytosol"/>
    <property type="evidence" value="ECO:0007669"/>
    <property type="project" value="TreeGrafter"/>
</dbReference>
<dbReference type="GO" id="GO:0004813">
    <property type="term" value="F:alanine-tRNA ligase activity"/>
    <property type="evidence" value="ECO:0007669"/>
    <property type="project" value="UniProtKB-UniRule"/>
</dbReference>
<dbReference type="GO" id="GO:0002161">
    <property type="term" value="F:aminoacyl-tRNA deacylase activity"/>
    <property type="evidence" value="ECO:0007669"/>
    <property type="project" value="TreeGrafter"/>
</dbReference>
<dbReference type="GO" id="GO:0005524">
    <property type="term" value="F:ATP binding"/>
    <property type="evidence" value="ECO:0007669"/>
    <property type="project" value="UniProtKB-UniRule"/>
</dbReference>
<dbReference type="GO" id="GO:0000049">
    <property type="term" value="F:tRNA binding"/>
    <property type="evidence" value="ECO:0007669"/>
    <property type="project" value="UniProtKB-KW"/>
</dbReference>
<dbReference type="GO" id="GO:0008270">
    <property type="term" value="F:zinc ion binding"/>
    <property type="evidence" value="ECO:0007669"/>
    <property type="project" value="UniProtKB-UniRule"/>
</dbReference>
<dbReference type="GO" id="GO:0006419">
    <property type="term" value="P:alanyl-tRNA aminoacylation"/>
    <property type="evidence" value="ECO:0007669"/>
    <property type="project" value="UniProtKB-UniRule"/>
</dbReference>
<dbReference type="GO" id="GO:0045892">
    <property type="term" value="P:negative regulation of DNA-templated transcription"/>
    <property type="evidence" value="ECO:0007669"/>
    <property type="project" value="TreeGrafter"/>
</dbReference>
<dbReference type="CDD" id="cd00673">
    <property type="entry name" value="AlaRS_core"/>
    <property type="match status" value="1"/>
</dbReference>
<dbReference type="FunFam" id="3.10.310.40:FF:000001">
    <property type="entry name" value="Alanine--tRNA ligase"/>
    <property type="match status" value="1"/>
</dbReference>
<dbReference type="FunFam" id="3.30.54.20:FF:000001">
    <property type="entry name" value="Alanine--tRNA ligase"/>
    <property type="match status" value="1"/>
</dbReference>
<dbReference type="FunFam" id="3.30.930.10:FF:000004">
    <property type="entry name" value="Alanine--tRNA ligase"/>
    <property type="match status" value="1"/>
</dbReference>
<dbReference type="FunFam" id="3.30.980.10:FF:000004">
    <property type="entry name" value="Alanine--tRNA ligase, cytoplasmic"/>
    <property type="match status" value="1"/>
</dbReference>
<dbReference type="Gene3D" id="2.40.30.130">
    <property type="match status" value="1"/>
</dbReference>
<dbReference type="Gene3D" id="3.10.310.40">
    <property type="match status" value="1"/>
</dbReference>
<dbReference type="Gene3D" id="3.30.54.20">
    <property type="match status" value="1"/>
</dbReference>
<dbReference type="Gene3D" id="3.30.930.10">
    <property type="entry name" value="Bira Bifunctional Protein, Domain 2"/>
    <property type="match status" value="1"/>
</dbReference>
<dbReference type="Gene3D" id="3.30.980.10">
    <property type="entry name" value="Threonyl-trna Synthetase, Chain A, domain 2"/>
    <property type="match status" value="1"/>
</dbReference>
<dbReference type="HAMAP" id="MF_00036_B">
    <property type="entry name" value="Ala_tRNA_synth_B"/>
    <property type="match status" value="1"/>
</dbReference>
<dbReference type="InterPro" id="IPR045864">
    <property type="entry name" value="aa-tRNA-synth_II/BPL/LPL"/>
</dbReference>
<dbReference type="InterPro" id="IPR002318">
    <property type="entry name" value="Ala-tRNA-lgiase_IIc"/>
</dbReference>
<dbReference type="InterPro" id="IPR018162">
    <property type="entry name" value="Ala-tRNA-ligase_IIc_anticod-bd"/>
</dbReference>
<dbReference type="InterPro" id="IPR018165">
    <property type="entry name" value="Ala-tRNA-synth_IIc_core"/>
</dbReference>
<dbReference type="InterPro" id="IPR018164">
    <property type="entry name" value="Ala-tRNA-synth_IIc_N"/>
</dbReference>
<dbReference type="InterPro" id="IPR050058">
    <property type="entry name" value="Ala-tRNA_ligase"/>
</dbReference>
<dbReference type="InterPro" id="IPR023033">
    <property type="entry name" value="Ala_tRNA_ligase_euk/bac"/>
</dbReference>
<dbReference type="InterPro" id="IPR003156">
    <property type="entry name" value="DHHA1_dom"/>
</dbReference>
<dbReference type="InterPro" id="IPR018163">
    <property type="entry name" value="Thr/Ala-tRNA-synth_IIc_edit"/>
</dbReference>
<dbReference type="InterPro" id="IPR009000">
    <property type="entry name" value="Transl_B-barrel_sf"/>
</dbReference>
<dbReference type="InterPro" id="IPR012947">
    <property type="entry name" value="tRNA_SAD"/>
</dbReference>
<dbReference type="NCBIfam" id="TIGR00344">
    <property type="entry name" value="alaS"/>
    <property type="match status" value="1"/>
</dbReference>
<dbReference type="PANTHER" id="PTHR11777:SF9">
    <property type="entry name" value="ALANINE--TRNA LIGASE, CYTOPLASMIC"/>
    <property type="match status" value="1"/>
</dbReference>
<dbReference type="PANTHER" id="PTHR11777">
    <property type="entry name" value="ALANYL-TRNA SYNTHETASE"/>
    <property type="match status" value="1"/>
</dbReference>
<dbReference type="Pfam" id="PF02272">
    <property type="entry name" value="DHHA1"/>
    <property type="match status" value="1"/>
</dbReference>
<dbReference type="Pfam" id="PF01411">
    <property type="entry name" value="tRNA-synt_2c"/>
    <property type="match status" value="1"/>
</dbReference>
<dbReference type="Pfam" id="PF07973">
    <property type="entry name" value="tRNA_SAD"/>
    <property type="match status" value="1"/>
</dbReference>
<dbReference type="PRINTS" id="PR00980">
    <property type="entry name" value="TRNASYNTHALA"/>
</dbReference>
<dbReference type="SMART" id="SM00863">
    <property type="entry name" value="tRNA_SAD"/>
    <property type="match status" value="1"/>
</dbReference>
<dbReference type="SUPFAM" id="SSF55681">
    <property type="entry name" value="Class II aaRS and biotin synthetases"/>
    <property type="match status" value="1"/>
</dbReference>
<dbReference type="SUPFAM" id="SSF101353">
    <property type="entry name" value="Putative anticodon-binding domain of alanyl-tRNA synthetase (AlaRS)"/>
    <property type="match status" value="1"/>
</dbReference>
<dbReference type="SUPFAM" id="SSF55186">
    <property type="entry name" value="ThrRS/AlaRS common domain"/>
    <property type="match status" value="1"/>
</dbReference>
<dbReference type="SUPFAM" id="SSF50447">
    <property type="entry name" value="Translation proteins"/>
    <property type="match status" value="1"/>
</dbReference>
<dbReference type="PROSITE" id="PS50860">
    <property type="entry name" value="AA_TRNA_LIGASE_II_ALA"/>
    <property type="match status" value="1"/>
</dbReference>
<comment type="function">
    <text evidence="1">Catalyzes the attachment of alanine to tRNA(Ala) in a two-step reaction: alanine is first activated by ATP to form Ala-AMP and then transferred to the acceptor end of tRNA(Ala). Also edits incorrectly charged Ser-tRNA(Ala) and Gly-tRNA(Ala) via its editing domain.</text>
</comment>
<comment type="catalytic activity">
    <reaction evidence="1">
        <text>tRNA(Ala) + L-alanine + ATP = L-alanyl-tRNA(Ala) + AMP + diphosphate</text>
        <dbReference type="Rhea" id="RHEA:12540"/>
        <dbReference type="Rhea" id="RHEA-COMP:9657"/>
        <dbReference type="Rhea" id="RHEA-COMP:9923"/>
        <dbReference type="ChEBI" id="CHEBI:30616"/>
        <dbReference type="ChEBI" id="CHEBI:33019"/>
        <dbReference type="ChEBI" id="CHEBI:57972"/>
        <dbReference type="ChEBI" id="CHEBI:78442"/>
        <dbReference type="ChEBI" id="CHEBI:78497"/>
        <dbReference type="ChEBI" id="CHEBI:456215"/>
        <dbReference type="EC" id="6.1.1.7"/>
    </reaction>
</comment>
<comment type="cofactor">
    <cofactor evidence="1">
        <name>Zn(2+)</name>
        <dbReference type="ChEBI" id="CHEBI:29105"/>
    </cofactor>
    <text evidence="1">Binds 1 zinc ion per subunit.</text>
</comment>
<comment type="subcellular location">
    <subcellularLocation>
        <location evidence="1">Cytoplasm</location>
    </subcellularLocation>
</comment>
<comment type="domain">
    <text evidence="1">Consists of three domains; the N-terminal catalytic domain, the editing domain and the C-terminal C-Ala domain. The editing domain removes incorrectly charged amino acids, while the C-Ala domain, along with tRNA(Ala), serves as a bridge to cooperatively bring together the editing and aminoacylation centers thus stimulating deacylation of misacylated tRNAs.</text>
</comment>
<comment type="similarity">
    <text evidence="1">Belongs to the class-II aminoacyl-tRNA synthetase family.</text>
</comment>
<gene>
    <name evidence="1" type="primary">alaS</name>
    <name type="ordered locus">CFF8240_1029</name>
</gene>
<reference key="1">
    <citation type="submission" date="2006-11" db="EMBL/GenBank/DDBJ databases">
        <title>Sequence of Campylobacter fetus subsp. fetus 82-40.</title>
        <authorList>
            <person name="Fouts D.E."/>
            <person name="Nelson K.E."/>
        </authorList>
    </citation>
    <scope>NUCLEOTIDE SEQUENCE [LARGE SCALE GENOMIC DNA]</scope>
    <source>
        <strain>82-40</strain>
    </source>
</reference>
<name>SYA_CAMFF</name>
<evidence type="ECO:0000255" key="1">
    <source>
        <dbReference type="HAMAP-Rule" id="MF_00036"/>
    </source>
</evidence>
<organism>
    <name type="scientific">Campylobacter fetus subsp. fetus (strain 82-40)</name>
    <dbReference type="NCBI Taxonomy" id="360106"/>
    <lineage>
        <taxon>Bacteria</taxon>
        <taxon>Pseudomonadati</taxon>
        <taxon>Campylobacterota</taxon>
        <taxon>Epsilonproteobacteria</taxon>
        <taxon>Campylobacterales</taxon>
        <taxon>Campylobacteraceae</taxon>
        <taxon>Campylobacter</taxon>
    </lineage>
</organism>
<proteinExistence type="inferred from homology"/>